<feature type="chain" id="PRO_1000044870" description="Chaperone protein HscA homolog">
    <location>
        <begin position="1"/>
        <end position="619"/>
    </location>
</feature>
<keyword id="KW-0067">ATP-binding</keyword>
<keyword id="KW-0143">Chaperone</keyword>
<keyword id="KW-0547">Nucleotide-binding</keyword>
<keyword id="KW-0346">Stress response</keyword>
<proteinExistence type="inferred from homology"/>
<accession>Q02RW4</accession>
<comment type="function">
    <text evidence="1">Chaperone involved in the maturation of iron-sulfur cluster-containing proteins. Has a low intrinsic ATPase activity which is markedly stimulated by HscB.</text>
</comment>
<comment type="similarity">
    <text evidence="1">Belongs to the heat shock protein 70 family.</text>
</comment>
<sequence length="619" mass="66460">MALLQIAEPGQSPKPHERRLAVGIDLGTTNSLVAAVRSGVAEPLPDAQGRLILPSAVRYHAERAEVGESARAAAAKDPFNTIISVKRLMGRGLEDVKQLGEQLPYRFRQGESHMPFIETVQGLKSPVEVSADILRELRQRAETTLGGELVGAVITVPAYFDDAQRQATKDAARLAGLNVLRLLNEPTAAAVAYGLDKGAEGLVAIYDLGGGTFDISILRLTRGVFEVLATGGDTALGGDDFDHAIAGWVIEQAGLSADLDPGSQRQLLQIACAAKERLTDEASVRVAYGDWSGELSRATLDELIEPFVARSLKSCRRAVRDSGVDLEEIRSVVMVGGSTRVPRVRTAVGELFGCEPLTDIDPDQVVAIGAAIQADALAGNKRGEELLLLDVIPLSLGLETMGGLMEKVIPRNTTIPVARAQEFTTYKDGQTAMMIHVLQGERELVKDCRSLARFELRGIPPMVAGAAKIRVTFQVDADGLLGVSARELSSGVEASIQVKPSYGLTDGEIARMLKDSFDYAGDDKAARALREQQVEAQRLLEAVQSALDVDGERLLDEEERLAIAAQMDTLRELAGGSDTAAIENQIKRLSQVTDAFAARRMDATVKAALSGRRLNEIEE</sequence>
<gene>
    <name evidence="1" type="primary">hscA</name>
    <name type="ordered locus">PA14_14780</name>
</gene>
<name>HSCA_PSEAB</name>
<dbReference type="EMBL" id="CP000438">
    <property type="protein sequence ID" value="ABJ13071.1"/>
    <property type="molecule type" value="Genomic_DNA"/>
</dbReference>
<dbReference type="RefSeq" id="WP_003092822.1">
    <property type="nucleotide sequence ID" value="NZ_CP034244.1"/>
</dbReference>
<dbReference type="SMR" id="Q02RW4"/>
<dbReference type="KEGG" id="pau:PA14_14780"/>
<dbReference type="PseudoCAP" id="PA14_14780"/>
<dbReference type="HOGENOM" id="CLU_005965_2_1_6"/>
<dbReference type="BioCyc" id="PAER208963:G1G74-1212-MONOMER"/>
<dbReference type="Proteomes" id="UP000000653">
    <property type="component" value="Chromosome"/>
</dbReference>
<dbReference type="GO" id="GO:0005524">
    <property type="term" value="F:ATP binding"/>
    <property type="evidence" value="ECO:0007669"/>
    <property type="project" value="UniProtKB-KW"/>
</dbReference>
<dbReference type="GO" id="GO:0016887">
    <property type="term" value="F:ATP hydrolysis activity"/>
    <property type="evidence" value="ECO:0007669"/>
    <property type="project" value="UniProtKB-UniRule"/>
</dbReference>
<dbReference type="GO" id="GO:0140662">
    <property type="term" value="F:ATP-dependent protein folding chaperone"/>
    <property type="evidence" value="ECO:0007669"/>
    <property type="project" value="InterPro"/>
</dbReference>
<dbReference type="GO" id="GO:0051082">
    <property type="term" value="F:unfolded protein binding"/>
    <property type="evidence" value="ECO:0007669"/>
    <property type="project" value="InterPro"/>
</dbReference>
<dbReference type="GO" id="GO:0016226">
    <property type="term" value="P:iron-sulfur cluster assembly"/>
    <property type="evidence" value="ECO:0007669"/>
    <property type="project" value="InterPro"/>
</dbReference>
<dbReference type="CDD" id="cd10236">
    <property type="entry name" value="ASKHA_NBD_HSP70_HscA"/>
    <property type="match status" value="1"/>
</dbReference>
<dbReference type="FunFam" id="3.30.420.40:FF:000046">
    <property type="entry name" value="Chaperone protein HscA"/>
    <property type="match status" value="1"/>
</dbReference>
<dbReference type="FunFam" id="2.60.34.10:FF:000005">
    <property type="entry name" value="Chaperone protein HscA homolog"/>
    <property type="match status" value="1"/>
</dbReference>
<dbReference type="Gene3D" id="1.20.1270.10">
    <property type="match status" value="1"/>
</dbReference>
<dbReference type="Gene3D" id="3.30.420.40">
    <property type="match status" value="2"/>
</dbReference>
<dbReference type="Gene3D" id="3.90.640.10">
    <property type="entry name" value="Actin, Chain A, domain 4"/>
    <property type="match status" value="1"/>
</dbReference>
<dbReference type="Gene3D" id="2.60.34.10">
    <property type="entry name" value="Substrate Binding Domain Of DNAk, Chain A, domain 1"/>
    <property type="match status" value="1"/>
</dbReference>
<dbReference type="HAMAP" id="MF_00679">
    <property type="entry name" value="HscA"/>
    <property type="match status" value="1"/>
</dbReference>
<dbReference type="InterPro" id="IPR043129">
    <property type="entry name" value="ATPase_NBD"/>
</dbReference>
<dbReference type="InterPro" id="IPR018181">
    <property type="entry name" value="Heat_shock_70_CS"/>
</dbReference>
<dbReference type="InterPro" id="IPR042039">
    <property type="entry name" value="HscA_NBD"/>
</dbReference>
<dbReference type="InterPro" id="IPR029048">
    <property type="entry name" value="HSP70_C_sf"/>
</dbReference>
<dbReference type="InterPro" id="IPR029047">
    <property type="entry name" value="HSP70_peptide-bd_sf"/>
</dbReference>
<dbReference type="InterPro" id="IPR013126">
    <property type="entry name" value="Hsp_70_fam"/>
</dbReference>
<dbReference type="InterPro" id="IPR010236">
    <property type="entry name" value="ISC_FeS_clus_asmbl_HscA"/>
</dbReference>
<dbReference type="NCBIfam" id="TIGR01991">
    <property type="entry name" value="HscA"/>
    <property type="match status" value="1"/>
</dbReference>
<dbReference type="NCBIfam" id="NF003520">
    <property type="entry name" value="PRK05183.1"/>
    <property type="match status" value="1"/>
</dbReference>
<dbReference type="PANTHER" id="PTHR19375">
    <property type="entry name" value="HEAT SHOCK PROTEIN 70KDA"/>
    <property type="match status" value="1"/>
</dbReference>
<dbReference type="Pfam" id="PF00012">
    <property type="entry name" value="HSP70"/>
    <property type="match status" value="1"/>
</dbReference>
<dbReference type="PRINTS" id="PR00301">
    <property type="entry name" value="HEATSHOCK70"/>
</dbReference>
<dbReference type="SUPFAM" id="SSF53067">
    <property type="entry name" value="Actin-like ATPase domain"/>
    <property type="match status" value="2"/>
</dbReference>
<dbReference type="SUPFAM" id="SSF100934">
    <property type="entry name" value="Heat shock protein 70kD (HSP70), C-terminal subdomain"/>
    <property type="match status" value="1"/>
</dbReference>
<dbReference type="SUPFAM" id="SSF100920">
    <property type="entry name" value="Heat shock protein 70kD (HSP70), peptide-binding domain"/>
    <property type="match status" value="1"/>
</dbReference>
<dbReference type="PROSITE" id="PS00297">
    <property type="entry name" value="HSP70_1"/>
    <property type="match status" value="1"/>
</dbReference>
<dbReference type="PROSITE" id="PS00329">
    <property type="entry name" value="HSP70_2"/>
    <property type="match status" value="1"/>
</dbReference>
<dbReference type="PROSITE" id="PS01036">
    <property type="entry name" value="HSP70_3"/>
    <property type="match status" value="1"/>
</dbReference>
<protein>
    <recommendedName>
        <fullName evidence="1">Chaperone protein HscA homolog</fullName>
    </recommendedName>
</protein>
<organism>
    <name type="scientific">Pseudomonas aeruginosa (strain UCBPP-PA14)</name>
    <dbReference type="NCBI Taxonomy" id="208963"/>
    <lineage>
        <taxon>Bacteria</taxon>
        <taxon>Pseudomonadati</taxon>
        <taxon>Pseudomonadota</taxon>
        <taxon>Gammaproteobacteria</taxon>
        <taxon>Pseudomonadales</taxon>
        <taxon>Pseudomonadaceae</taxon>
        <taxon>Pseudomonas</taxon>
    </lineage>
</organism>
<reference key="1">
    <citation type="journal article" date="2006" name="Genome Biol.">
        <title>Genomic analysis reveals that Pseudomonas aeruginosa virulence is combinatorial.</title>
        <authorList>
            <person name="Lee D.G."/>
            <person name="Urbach J.M."/>
            <person name="Wu G."/>
            <person name="Liberati N.T."/>
            <person name="Feinbaum R.L."/>
            <person name="Miyata S."/>
            <person name="Diggins L.T."/>
            <person name="He J."/>
            <person name="Saucier M."/>
            <person name="Deziel E."/>
            <person name="Friedman L."/>
            <person name="Li L."/>
            <person name="Grills G."/>
            <person name="Montgomery K."/>
            <person name="Kucherlapati R."/>
            <person name="Rahme L.G."/>
            <person name="Ausubel F.M."/>
        </authorList>
    </citation>
    <scope>NUCLEOTIDE SEQUENCE [LARGE SCALE GENOMIC DNA]</scope>
    <source>
        <strain>UCBPP-PA14</strain>
    </source>
</reference>
<evidence type="ECO:0000255" key="1">
    <source>
        <dbReference type="HAMAP-Rule" id="MF_00679"/>
    </source>
</evidence>